<comment type="function">
    <text evidence="1">F(1)F(0) ATP synthase produces ATP from ADP in the presence of a proton or sodium gradient. F-type ATPases consist of two structural domains, F(1) containing the extramembraneous catalytic core and F(0) containing the membrane proton channel, linked together by a central stalk and a peripheral stalk. During catalysis, ATP synthesis in the catalytic domain of F(1) is coupled via a rotary mechanism of the central stalk subunits to proton translocation.</text>
</comment>
<comment type="function">
    <text evidence="1">Component of the F(0) channel, it forms part of the peripheral stalk, linking F(1) to F(0).</text>
</comment>
<comment type="subunit">
    <text evidence="1">F-type ATPases have 2 components, F(1) - the catalytic core - and F(0) - the membrane proton channel. F(1) has five subunits: alpha(3), beta(3), gamma(1), delta(1), epsilon(1). F(0) has three main subunits: a(1), b(2) and c(10-14). The alpha and beta chains form an alternating ring which encloses part of the gamma chain. F(1) is attached to F(0) by a central stalk formed by the gamma and epsilon chains, while a peripheral stalk is formed by the delta and b chains.</text>
</comment>
<comment type="subcellular location">
    <subcellularLocation>
        <location evidence="1">Cell inner membrane</location>
        <topology evidence="1">Single-pass membrane protein</topology>
    </subcellularLocation>
</comment>
<comment type="similarity">
    <text evidence="1">Belongs to the ATPase B chain family.</text>
</comment>
<protein>
    <recommendedName>
        <fullName evidence="1">ATP synthase subunit b</fullName>
    </recommendedName>
    <alternativeName>
        <fullName evidence="1">ATP synthase F(0) sector subunit b</fullName>
    </alternativeName>
    <alternativeName>
        <fullName evidence="1">ATPase subunit I</fullName>
    </alternativeName>
    <alternativeName>
        <fullName evidence="1">F-type ATPase subunit b</fullName>
        <shortName evidence="1">F-ATPase subunit b</shortName>
    </alternativeName>
</protein>
<organism>
    <name type="scientific">Burkholderia ambifaria (strain MC40-6)</name>
    <dbReference type="NCBI Taxonomy" id="398577"/>
    <lineage>
        <taxon>Bacteria</taxon>
        <taxon>Pseudomonadati</taxon>
        <taxon>Pseudomonadota</taxon>
        <taxon>Betaproteobacteria</taxon>
        <taxon>Burkholderiales</taxon>
        <taxon>Burkholderiaceae</taxon>
        <taxon>Burkholderia</taxon>
        <taxon>Burkholderia cepacia complex</taxon>
    </lineage>
</organism>
<reference key="1">
    <citation type="submission" date="2008-04" db="EMBL/GenBank/DDBJ databases">
        <title>Complete sequence of chromosome 1 of Burkholderia ambifaria MC40-6.</title>
        <authorList>
            <person name="Copeland A."/>
            <person name="Lucas S."/>
            <person name="Lapidus A."/>
            <person name="Glavina del Rio T."/>
            <person name="Dalin E."/>
            <person name="Tice H."/>
            <person name="Pitluck S."/>
            <person name="Chain P."/>
            <person name="Malfatti S."/>
            <person name="Shin M."/>
            <person name="Vergez L."/>
            <person name="Lang D."/>
            <person name="Schmutz J."/>
            <person name="Larimer F."/>
            <person name="Land M."/>
            <person name="Hauser L."/>
            <person name="Kyrpides N."/>
            <person name="Lykidis A."/>
            <person name="Ramette A."/>
            <person name="Konstantinidis K."/>
            <person name="Tiedje J."/>
            <person name="Richardson P."/>
        </authorList>
    </citation>
    <scope>NUCLEOTIDE SEQUENCE [LARGE SCALE GENOMIC DNA]</scope>
    <source>
        <strain>MC40-6</strain>
    </source>
</reference>
<feature type="chain" id="PRO_0000368379" description="ATP synthase subunit b">
    <location>
        <begin position="1"/>
        <end position="156"/>
    </location>
</feature>
<feature type="transmembrane region" description="Helical" evidence="1">
    <location>
        <begin position="7"/>
        <end position="29"/>
    </location>
</feature>
<proteinExistence type="inferred from homology"/>
<sequence>MNLNATLFAQMVVFLVLAWFTMKFVWPPLINALDERSKKIADGLAAAEKGKAELDAAHKRVDQELAQARNDGQQRIADAEKRAQAVAEEIKANAQAEAARIVAQAKAEAEQQIVKAREALRGEVASLAVKGAEQILKREVDQTAHAQLLNQLKAEL</sequence>
<keyword id="KW-0066">ATP synthesis</keyword>
<keyword id="KW-0997">Cell inner membrane</keyword>
<keyword id="KW-1003">Cell membrane</keyword>
<keyword id="KW-0138">CF(0)</keyword>
<keyword id="KW-0375">Hydrogen ion transport</keyword>
<keyword id="KW-0406">Ion transport</keyword>
<keyword id="KW-0472">Membrane</keyword>
<keyword id="KW-0812">Transmembrane</keyword>
<keyword id="KW-1133">Transmembrane helix</keyword>
<keyword id="KW-0813">Transport</keyword>
<accession>B1YQL0</accession>
<name>ATPF_BURA4</name>
<dbReference type="EMBL" id="CP001025">
    <property type="protein sequence ID" value="ACB62604.1"/>
    <property type="molecule type" value="Genomic_DNA"/>
</dbReference>
<dbReference type="RefSeq" id="WP_006751767.1">
    <property type="nucleotide sequence ID" value="NC_010551.1"/>
</dbReference>
<dbReference type="SMR" id="B1YQL0"/>
<dbReference type="KEGG" id="bac:BamMC406_0102"/>
<dbReference type="HOGENOM" id="CLU_079215_4_5_4"/>
<dbReference type="OrthoDB" id="9788020at2"/>
<dbReference type="Proteomes" id="UP000001680">
    <property type="component" value="Chromosome 1"/>
</dbReference>
<dbReference type="GO" id="GO:0005886">
    <property type="term" value="C:plasma membrane"/>
    <property type="evidence" value="ECO:0007669"/>
    <property type="project" value="UniProtKB-SubCell"/>
</dbReference>
<dbReference type="GO" id="GO:0045259">
    <property type="term" value="C:proton-transporting ATP synthase complex"/>
    <property type="evidence" value="ECO:0007669"/>
    <property type="project" value="UniProtKB-KW"/>
</dbReference>
<dbReference type="GO" id="GO:0046933">
    <property type="term" value="F:proton-transporting ATP synthase activity, rotational mechanism"/>
    <property type="evidence" value="ECO:0007669"/>
    <property type="project" value="UniProtKB-UniRule"/>
</dbReference>
<dbReference type="GO" id="GO:0046961">
    <property type="term" value="F:proton-transporting ATPase activity, rotational mechanism"/>
    <property type="evidence" value="ECO:0007669"/>
    <property type="project" value="TreeGrafter"/>
</dbReference>
<dbReference type="CDD" id="cd06503">
    <property type="entry name" value="ATP-synt_Fo_b"/>
    <property type="match status" value="1"/>
</dbReference>
<dbReference type="Gene3D" id="6.10.250.1580">
    <property type="match status" value="1"/>
</dbReference>
<dbReference type="HAMAP" id="MF_01398">
    <property type="entry name" value="ATP_synth_b_bprime"/>
    <property type="match status" value="1"/>
</dbReference>
<dbReference type="InterPro" id="IPR028987">
    <property type="entry name" value="ATP_synth_B-like_membr_sf"/>
</dbReference>
<dbReference type="InterPro" id="IPR002146">
    <property type="entry name" value="ATP_synth_b/b'su_bac/chlpt"/>
</dbReference>
<dbReference type="InterPro" id="IPR005864">
    <property type="entry name" value="ATP_synth_F0_bsu_bac"/>
</dbReference>
<dbReference type="InterPro" id="IPR050059">
    <property type="entry name" value="ATP_synthase_B_chain"/>
</dbReference>
<dbReference type="NCBIfam" id="TIGR01144">
    <property type="entry name" value="ATP_synt_b"/>
    <property type="match status" value="1"/>
</dbReference>
<dbReference type="NCBIfam" id="NF004411">
    <property type="entry name" value="PRK05759.1-2"/>
    <property type="match status" value="1"/>
</dbReference>
<dbReference type="PANTHER" id="PTHR33445:SF1">
    <property type="entry name" value="ATP SYNTHASE SUBUNIT B"/>
    <property type="match status" value="1"/>
</dbReference>
<dbReference type="PANTHER" id="PTHR33445">
    <property type="entry name" value="ATP SYNTHASE SUBUNIT B', CHLOROPLASTIC"/>
    <property type="match status" value="1"/>
</dbReference>
<dbReference type="Pfam" id="PF00430">
    <property type="entry name" value="ATP-synt_B"/>
    <property type="match status" value="1"/>
</dbReference>
<dbReference type="SUPFAM" id="SSF81573">
    <property type="entry name" value="F1F0 ATP synthase subunit B, membrane domain"/>
    <property type="match status" value="1"/>
</dbReference>
<evidence type="ECO:0000255" key="1">
    <source>
        <dbReference type="HAMAP-Rule" id="MF_01398"/>
    </source>
</evidence>
<gene>
    <name evidence="1" type="primary">atpF</name>
    <name type="ordered locus">BamMC406_0102</name>
</gene>